<dbReference type="EMBL" id="AB024057">
    <property type="protein sequence ID" value="BAA75489.1"/>
    <property type="molecule type" value="mRNA"/>
</dbReference>
<dbReference type="EMBL" id="AB017114">
    <property type="protein sequence ID" value="BAA76517.1"/>
    <property type="molecule type" value="mRNA"/>
</dbReference>
<dbReference type="EMBL" id="AB449889">
    <property type="protein sequence ID" value="BAH16632.1"/>
    <property type="molecule type" value="mRNA"/>
</dbReference>
<dbReference type="EMBL" id="AC016738">
    <property type="protein sequence ID" value="AAY14824.1"/>
    <property type="status" value="ALT_SEQ"/>
    <property type="molecule type" value="Genomic_DNA"/>
</dbReference>
<dbReference type="EMBL" id="AC013722">
    <property type="status" value="NOT_ANNOTATED_CDS"/>
    <property type="molecule type" value="Genomic_DNA"/>
</dbReference>
<dbReference type="EMBL" id="AK292826">
    <property type="protein sequence ID" value="BAF85515.1"/>
    <property type="status" value="ALT_INIT"/>
    <property type="molecule type" value="mRNA"/>
</dbReference>
<dbReference type="CCDS" id="CCDS46375.1">
    <molecule id="O95759-1"/>
</dbReference>
<dbReference type="RefSeq" id="NP_001095896.1">
    <molecule id="O95759-1"/>
    <property type="nucleotide sequence ID" value="NM_001102426.3"/>
</dbReference>
<dbReference type="SMR" id="O95759"/>
<dbReference type="BioGRID" id="116311">
    <property type="interactions" value="57"/>
</dbReference>
<dbReference type="FunCoup" id="O95759">
    <property type="interactions" value="659"/>
</dbReference>
<dbReference type="IntAct" id="O95759">
    <property type="interactions" value="19"/>
</dbReference>
<dbReference type="STRING" id="9606.ENSP00000386856"/>
<dbReference type="iPTMnet" id="O95759"/>
<dbReference type="PhosphoSitePlus" id="O95759"/>
<dbReference type="BioMuta" id="TBC1D8"/>
<dbReference type="jPOST" id="O95759"/>
<dbReference type="MassIVE" id="O95759"/>
<dbReference type="PaxDb" id="9606-ENSP00000366036"/>
<dbReference type="PeptideAtlas" id="O95759"/>
<dbReference type="ProteomicsDB" id="51034">
    <molecule id="O95759-1"/>
</dbReference>
<dbReference type="ProteomicsDB" id="51035">
    <molecule id="O95759-2"/>
</dbReference>
<dbReference type="Pumba" id="O95759"/>
<dbReference type="Antibodypedia" id="32896">
    <property type="antibodies" value="82 antibodies from 17 providers"/>
</dbReference>
<dbReference type="DNASU" id="11138"/>
<dbReference type="Ensembl" id="ENST00000376840.8">
    <molecule id="O95759-1"/>
    <property type="protein sequence ID" value="ENSP00000366036.4"/>
    <property type="gene ID" value="ENSG00000204634.13"/>
</dbReference>
<dbReference type="GeneID" id="11138"/>
<dbReference type="KEGG" id="hsa:11138"/>
<dbReference type="UCSC" id="uc010fiv.4">
    <molecule id="O95759-1"/>
    <property type="organism name" value="human"/>
</dbReference>
<dbReference type="AGR" id="HGNC:17791"/>
<dbReference type="CTD" id="11138"/>
<dbReference type="DisGeNET" id="11138"/>
<dbReference type="GeneCards" id="TBC1D8"/>
<dbReference type="HGNC" id="HGNC:17791">
    <property type="gene designation" value="TBC1D8"/>
</dbReference>
<dbReference type="HPA" id="ENSG00000204634">
    <property type="expression patterns" value="Low tissue specificity"/>
</dbReference>
<dbReference type="neXtProt" id="NX_O95759"/>
<dbReference type="OpenTargets" id="ENSG00000204634"/>
<dbReference type="PharmGKB" id="PA134885935"/>
<dbReference type="VEuPathDB" id="HostDB:ENSG00000204634"/>
<dbReference type="eggNOG" id="KOG4347">
    <property type="taxonomic scope" value="Eukaryota"/>
</dbReference>
<dbReference type="GeneTree" id="ENSGT00940000158977"/>
<dbReference type="HOGENOM" id="CLU_003535_0_1_1"/>
<dbReference type="InParanoid" id="O95759"/>
<dbReference type="OrthoDB" id="17687at2759"/>
<dbReference type="PAN-GO" id="O95759">
    <property type="GO annotations" value="2 GO annotations based on evolutionary models"/>
</dbReference>
<dbReference type="PhylomeDB" id="O95759"/>
<dbReference type="TreeFam" id="TF313145"/>
<dbReference type="PathwayCommons" id="O95759"/>
<dbReference type="SignaLink" id="O95759"/>
<dbReference type="BioGRID-ORCS" id="11138">
    <property type="hits" value="14 hits in 1149 CRISPR screens"/>
</dbReference>
<dbReference type="ChiTaRS" id="TBC1D8">
    <property type="organism name" value="human"/>
</dbReference>
<dbReference type="GenomeRNAi" id="11138"/>
<dbReference type="Pharos" id="O95759">
    <property type="development level" value="Tdark"/>
</dbReference>
<dbReference type="PRO" id="PR:O95759"/>
<dbReference type="Proteomes" id="UP000005640">
    <property type="component" value="Chromosome 2"/>
</dbReference>
<dbReference type="RNAct" id="O95759">
    <property type="molecule type" value="protein"/>
</dbReference>
<dbReference type="Bgee" id="ENSG00000204634">
    <property type="expression patterns" value="Expressed in mucosa of stomach and 201 other cell types or tissues"/>
</dbReference>
<dbReference type="ExpressionAtlas" id="O95759">
    <property type="expression patterns" value="baseline and differential"/>
</dbReference>
<dbReference type="GO" id="GO:0016020">
    <property type="term" value="C:membrane"/>
    <property type="evidence" value="ECO:0000304"/>
    <property type="project" value="ProtInc"/>
</dbReference>
<dbReference type="GO" id="GO:0005096">
    <property type="term" value="F:GTPase activator activity"/>
    <property type="evidence" value="ECO:0000318"/>
    <property type="project" value="GO_Central"/>
</dbReference>
<dbReference type="GO" id="GO:0008015">
    <property type="term" value="P:blood circulation"/>
    <property type="evidence" value="ECO:0000304"/>
    <property type="project" value="ProtInc"/>
</dbReference>
<dbReference type="GO" id="GO:0008284">
    <property type="term" value="P:positive regulation of cell population proliferation"/>
    <property type="evidence" value="ECO:0000304"/>
    <property type="project" value="ProtInc"/>
</dbReference>
<dbReference type="CDD" id="cd13349">
    <property type="entry name" value="PH-GRAM1_TBC1D8"/>
    <property type="match status" value="1"/>
</dbReference>
<dbReference type="CDD" id="cd13353">
    <property type="entry name" value="PH-GRAM2_TBC1D8"/>
    <property type="match status" value="1"/>
</dbReference>
<dbReference type="FunFam" id="2.30.29.30:FF:000013">
    <property type="entry name" value="Putative TBC1 domain family member 8B"/>
    <property type="match status" value="1"/>
</dbReference>
<dbReference type="FunFam" id="2.30.29.30:FF:000259">
    <property type="entry name" value="TBC1 domain family member 8"/>
    <property type="match status" value="1"/>
</dbReference>
<dbReference type="FunFam" id="1.10.238.10:FF:000153">
    <property type="entry name" value="TBC1 domain family member 8 isoform X2"/>
    <property type="match status" value="1"/>
</dbReference>
<dbReference type="FunFam" id="1.10.472.80:FF:000030">
    <property type="entry name" value="TBC1 domain family member 8 isoform X2"/>
    <property type="match status" value="1"/>
</dbReference>
<dbReference type="FunFam" id="1.10.8.270:FF:000002">
    <property type="entry name" value="TBC1 domain family member 9B"/>
    <property type="match status" value="1"/>
</dbReference>
<dbReference type="Gene3D" id="1.10.238.10">
    <property type="entry name" value="EF-hand"/>
    <property type="match status" value="1"/>
</dbReference>
<dbReference type="Gene3D" id="2.30.29.30">
    <property type="entry name" value="Pleckstrin-homology domain (PH domain)/Phosphotyrosine-binding domain (PTB)"/>
    <property type="match status" value="2"/>
</dbReference>
<dbReference type="Gene3D" id="1.10.8.270">
    <property type="entry name" value="putative rabgap domain of human tbc1 domain family member 14 like domains"/>
    <property type="match status" value="1"/>
</dbReference>
<dbReference type="Gene3D" id="1.10.10.750">
    <property type="entry name" value="Ypt/Rab-GAP domain of gyp1p, domain 1"/>
    <property type="match status" value="1"/>
</dbReference>
<dbReference type="Gene3D" id="1.10.472.80">
    <property type="entry name" value="Ypt/Rab-GAP domain of gyp1p, domain 3"/>
    <property type="match status" value="1"/>
</dbReference>
<dbReference type="InterPro" id="IPR011992">
    <property type="entry name" value="EF-hand-dom_pair"/>
</dbReference>
<dbReference type="InterPro" id="IPR004182">
    <property type="entry name" value="GRAM"/>
</dbReference>
<dbReference type="InterPro" id="IPR011993">
    <property type="entry name" value="PH-like_dom_sf"/>
</dbReference>
<dbReference type="InterPro" id="IPR000195">
    <property type="entry name" value="Rab-GAP-TBC_dom"/>
</dbReference>
<dbReference type="InterPro" id="IPR035969">
    <property type="entry name" value="Rab-GAP_TBC_sf"/>
</dbReference>
<dbReference type="InterPro" id="IPR036009">
    <property type="entry name" value="TBC1D8_PH-GRAM1"/>
</dbReference>
<dbReference type="InterPro" id="IPR036016">
    <property type="entry name" value="TBC1D8_PH-GRAM2"/>
</dbReference>
<dbReference type="PANTHER" id="PTHR47666">
    <property type="entry name" value="PROTEIN VASCULAR ASSOCIATED DEATH 1, CHLOROPLASTIC"/>
    <property type="match status" value="1"/>
</dbReference>
<dbReference type="PANTHER" id="PTHR47666:SF2">
    <property type="entry name" value="TBC1 DOMAIN FAMILY MEMBER 8 ISOFORM X1"/>
    <property type="match status" value="1"/>
</dbReference>
<dbReference type="Pfam" id="PF02893">
    <property type="entry name" value="GRAM"/>
    <property type="match status" value="2"/>
</dbReference>
<dbReference type="Pfam" id="PF00566">
    <property type="entry name" value="RabGAP-TBC"/>
    <property type="match status" value="1"/>
</dbReference>
<dbReference type="SMART" id="SM00568">
    <property type="entry name" value="GRAM"/>
    <property type="match status" value="2"/>
</dbReference>
<dbReference type="SMART" id="SM00164">
    <property type="entry name" value="TBC"/>
    <property type="match status" value="1"/>
</dbReference>
<dbReference type="SUPFAM" id="SSF47473">
    <property type="entry name" value="EF-hand"/>
    <property type="match status" value="1"/>
</dbReference>
<dbReference type="SUPFAM" id="SSF47923">
    <property type="entry name" value="Ypt/Rab-GAP domain of gyp1p"/>
    <property type="match status" value="2"/>
</dbReference>
<dbReference type="PROSITE" id="PS50086">
    <property type="entry name" value="TBC_RABGAP"/>
    <property type="match status" value="1"/>
</dbReference>
<protein>
    <recommendedName>
        <fullName>TBC1 domain family member 8</fullName>
    </recommendedName>
    <alternativeName>
        <fullName>AD 3</fullName>
    </alternativeName>
    <alternativeName>
        <fullName>Vascular Rab-GAP/TBC-containing protein</fullName>
    </alternativeName>
</protein>
<name>TBCD8_HUMAN</name>
<gene>
    <name type="primary">TBC1D8</name>
    <name type="synonym">VRP</name>
</gene>
<comment type="function">
    <text>May act as a GTPase-activating protein for Rab family protein(s).</text>
</comment>
<comment type="interaction">
    <interactant intactId="EBI-10979580">
        <id>O95759</id>
    </interactant>
    <interactant intactId="EBI-359224">
        <id>Q13077</id>
        <label>TRAF1</label>
    </interactant>
    <organismsDiffer>false</organismsDiffer>
    <experiments>3</experiments>
</comment>
<comment type="alternative products">
    <event type="alternative splicing"/>
    <isoform>
        <id>O95759-1</id>
        <name>1</name>
        <sequence type="displayed"/>
    </isoform>
    <isoform>
        <id>O95759-2</id>
        <name>2</name>
        <sequence type="described" ref="VSP_038340"/>
    </isoform>
</comment>
<comment type="domain">
    <text evidence="1">The arginine and glutamine fingers are critical for the GTPase-activating mechanism, they pull out Rab's 'switch 2' glutamine and insert in Rab's active site.</text>
</comment>
<comment type="sequence caution" evidence="8">
    <conflict type="erroneous gene model prediction">
        <sequence resource="EMBL-CDS" id="AAY14824"/>
    </conflict>
</comment>
<comment type="sequence caution" evidence="8">
    <conflict type="erroneous initiation">
        <sequence resource="EMBL-CDS" id="BAF85515"/>
    </conflict>
</comment>
<reference key="1">
    <citation type="journal article" date="1999" name="Nucleic Acids Res.">
        <title>Antisense display -- a method for functional gene screening: evaluation in a cell-free system and isolation of angiogenesis-related genes.</title>
        <authorList>
            <person name="Yonekura H."/>
            <person name="Migita H."/>
            <person name="Sakurai S."/>
            <person name="Wang H."/>
            <person name="Harada S."/>
            <person name="Abedin M.J."/>
            <person name="Yamagishi S."/>
            <person name="Yamamoto H."/>
        </authorList>
    </citation>
    <scope>NUCLEOTIDE SEQUENCE [MRNA] (ISOFORM 2)</scope>
    <scope>NUCLEOTIDE SEQUENCE [MRNA] OF 248-980 (ISOFORMS 1/2)</scope>
    <scope>VARIANTS ALA-317 AND LEU-1073</scope>
    <source>
        <tissue>Capillary endothelium</tissue>
    </source>
</reference>
<reference key="2">
    <citation type="journal article" date="2009" name="Genes Cells">
        <title>Identification and characterization of a novel Tre-2/Bub2/Cdc16 (TBC) protein that possesses Rab3A-GAP activity.</title>
        <authorList>
            <person name="Ishibashi K."/>
            <person name="Kanno E."/>
            <person name="Itoh T."/>
            <person name="Fukuda M."/>
        </authorList>
    </citation>
    <scope>NUCLEOTIDE SEQUENCE [MRNA] (ISOFORM 1)</scope>
    <scope>VARIANT ALA-317</scope>
    <source>
        <tissue>Brain</tissue>
    </source>
</reference>
<reference key="3">
    <citation type="journal article" date="2005" name="Nature">
        <title>Generation and annotation of the DNA sequences of human chromosomes 2 and 4.</title>
        <authorList>
            <person name="Hillier L.W."/>
            <person name="Graves T.A."/>
            <person name="Fulton R.S."/>
            <person name="Fulton L.A."/>
            <person name="Pepin K.H."/>
            <person name="Minx P."/>
            <person name="Wagner-McPherson C."/>
            <person name="Layman D."/>
            <person name="Wylie K."/>
            <person name="Sekhon M."/>
            <person name="Becker M.C."/>
            <person name="Fewell G.A."/>
            <person name="Delehaunty K.D."/>
            <person name="Miner T.L."/>
            <person name="Nash W.E."/>
            <person name="Kremitzki C."/>
            <person name="Oddy L."/>
            <person name="Du H."/>
            <person name="Sun H."/>
            <person name="Bradshaw-Cordum H."/>
            <person name="Ali J."/>
            <person name="Carter J."/>
            <person name="Cordes M."/>
            <person name="Harris A."/>
            <person name="Isak A."/>
            <person name="van Brunt A."/>
            <person name="Nguyen C."/>
            <person name="Du F."/>
            <person name="Courtney L."/>
            <person name="Kalicki J."/>
            <person name="Ozersky P."/>
            <person name="Abbott S."/>
            <person name="Armstrong J."/>
            <person name="Belter E.A."/>
            <person name="Caruso L."/>
            <person name="Cedroni M."/>
            <person name="Cotton M."/>
            <person name="Davidson T."/>
            <person name="Desai A."/>
            <person name="Elliott G."/>
            <person name="Erb T."/>
            <person name="Fronick C."/>
            <person name="Gaige T."/>
            <person name="Haakenson W."/>
            <person name="Haglund K."/>
            <person name="Holmes A."/>
            <person name="Harkins R."/>
            <person name="Kim K."/>
            <person name="Kruchowski S.S."/>
            <person name="Strong C.M."/>
            <person name="Grewal N."/>
            <person name="Goyea E."/>
            <person name="Hou S."/>
            <person name="Levy A."/>
            <person name="Martinka S."/>
            <person name="Mead K."/>
            <person name="McLellan M.D."/>
            <person name="Meyer R."/>
            <person name="Randall-Maher J."/>
            <person name="Tomlinson C."/>
            <person name="Dauphin-Kohlberg S."/>
            <person name="Kozlowicz-Reilly A."/>
            <person name="Shah N."/>
            <person name="Swearengen-Shahid S."/>
            <person name="Snider J."/>
            <person name="Strong J.T."/>
            <person name="Thompson J."/>
            <person name="Yoakum M."/>
            <person name="Leonard S."/>
            <person name="Pearman C."/>
            <person name="Trani L."/>
            <person name="Radionenko M."/>
            <person name="Waligorski J.E."/>
            <person name="Wang C."/>
            <person name="Rock S.M."/>
            <person name="Tin-Wollam A.-M."/>
            <person name="Maupin R."/>
            <person name="Latreille P."/>
            <person name="Wendl M.C."/>
            <person name="Yang S.-P."/>
            <person name="Pohl C."/>
            <person name="Wallis J.W."/>
            <person name="Spieth J."/>
            <person name="Bieri T.A."/>
            <person name="Berkowicz N."/>
            <person name="Nelson J.O."/>
            <person name="Osborne J."/>
            <person name="Ding L."/>
            <person name="Meyer R."/>
            <person name="Sabo A."/>
            <person name="Shotland Y."/>
            <person name="Sinha P."/>
            <person name="Wohldmann P.E."/>
            <person name="Cook L.L."/>
            <person name="Hickenbotham M.T."/>
            <person name="Eldred J."/>
            <person name="Williams D."/>
            <person name="Jones T.A."/>
            <person name="She X."/>
            <person name="Ciccarelli F.D."/>
            <person name="Izaurralde E."/>
            <person name="Taylor J."/>
            <person name="Schmutz J."/>
            <person name="Myers R.M."/>
            <person name="Cox D.R."/>
            <person name="Huang X."/>
            <person name="McPherson J.D."/>
            <person name="Mardis E.R."/>
            <person name="Clifton S.W."/>
            <person name="Warren W.C."/>
            <person name="Chinwalla A.T."/>
            <person name="Eddy S.R."/>
            <person name="Marra M.A."/>
            <person name="Ovcharenko I."/>
            <person name="Furey T.S."/>
            <person name="Miller W."/>
            <person name="Eichler E.E."/>
            <person name="Bork P."/>
            <person name="Suyama M."/>
            <person name="Torrents D."/>
            <person name="Waterston R.H."/>
            <person name="Wilson R.K."/>
        </authorList>
    </citation>
    <scope>NUCLEOTIDE SEQUENCE [LARGE SCALE GENOMIC DNA]</scope>
</reference>
<reference key="4">
    <citation type="journal article" date="2004" name="Nat. Genet.">
        <title>Complete sequencing and characterization of 21,243 full-length human cDNAs.</title>
        <authorList>
            <person name="Ota T."/>
            <person name="Suzuki Y."/>
            <person name="Nishikawa T."/>
            <person name="Otsuki T."/>
            <person name="Sugiyama T."/>
            <person name="Irie R."/>
            <person name="Wakamatsu A."/>
            <person name="Hayashi K."/>
            <person name="Sato H."/>
            <person name="Nagai K."/>
            <person name="Kimura K."/>
            <person name="Makita H."/>
            <person name="Sekine M."/>
            <person name="Obayashi M."/>
            <person name="Nishi T."/>
            <person name="Shibahara T."/>
            <person name="Tanaka T."/>
            <person name="Ishii S."/>
            <person name="Yamamoto J."/>
            <person name="Saito K."/>
            <person name="Kawai Y."/>
            <person name="Isono Y."/>
            <person name="Nakamura Y."/>
            <person name="Nagahari K."/>
            <person name="Murakami K."/>
            <person name="Yasuda T."/>
            <person name="Iwayanagi T."/>
            <person name="Wagatsuma M."/>
            <person name="Shiratori A."/>
            <person name="Sudo H."/>
            <person name="Hosoiri T."/>
            <person name="Kaku Y."/>
            <person name="Kodaira H."/>
            <person name="Kondo H."/>
            <person name="Sugawara M."/>
            <person name="Takahashi M."/>
            <person name="Kanda K."/>
            <person name="Yokoi T."/>
            <person name="Furuya T."/>
            <person name="Kikkawa E."/>
            <person name="Omura Y."/>
            <person name="Abe K."/>
            <person name="Kamihara K."/>
            <person name="Katsuta N."/>
            <person name="Sato K."/>
            <person name="Tanikawa M."/>
            <person name="Yamazaki M."/>
            <person name="Ninomiya K."/>
            <person name="Ishibashi T."/>
            <person name="Yamashita H."/>
            <person name="Murakawa K."/>
            <person name="Fujimori K."/>
            <person name="Tanai H."/>
            <person name="Kimata M."/>
            <person name="Watanabe M."/>
            <person name="Hiraoka S."/>
            <person name="Chiba Y."/>
            <person name="Ishida S."/>
            <person name="Ono Y."/>
            <person name="Takiguchi S."/>
            <person name="Watanabe S."/>
            <person name="Yosida M."/>
            <person name="Hotuta T."/>
            <person name="Kusano J."/>
            <person name="Kanehori K."/>
            <person name="Takahashi-Fujii A."/>
            <person name="Hara H."/>
            <person name="Tanase T.-O."/>
            <person name="Nomura Y."/>
            <person name="Togiya S."/>
            <person name="Komai F."/>
            <person name="Hara R."/>
            <person name="Takeuchi K."/>
            <person name="Arita M."/>
            <person name="Imose N."/>
            <person name="Musashino K."/>
            <person name="Yuuki H."/>
            <person name="Oshima A."/>
            <person name="Sasaki N."/>
            <person name="Aotsuka S."/>
            <person name="Yoshikawa Y."/>
            <person name="Matsunawa H."/>
            <person name="Ichihara T."/>
            <person name="Shiohata N."/>
            <person name="Sano S."/>
            <person name="Moriya S."/>
            <person name="Momiyama H."/>
            <person name="Satoh N."/>
            <person name="Takami S."/>
            <person name="Terashima Y."/>
            <person name="Suzuki O."/>
            <person name="Nakagawa S."/>
            <person name="Senoh A."/>
            <person name="Mizoguchi H."/>
            <person name="Goto Y."/>
            <person name="Shimizu F."/>
            <person name="Wakebe H."/>
            <person name="Hishigaki H."/>
            <person name="Watanabe T."/>
            <person name="Sugiyama A."/>
            <person name="Takemoto M."/>
            <person name="Kawakami B."/>
            <person name="Yamazaki M."/>
            <person name="Watanabe K."/>
            <person name="Kumagai A."/>
            <person name="Itakura S."/>
            <person name="Fukuzumi Y."/>
            <person name="Fujimori Y."/>
            <person name="Komiyama M."/>
            <person name="Tashiro H."/>
            <person name="Tanigami A."/>
            <person name="Fujiwara T."/>
            <person name="Ono T."/>
            <person name="Yamada K."/>
            <person name="Fujii Y."/>
            <person name="Ozaki K."/>
            <person name="Hirao M."/>
            <person name="Ohmori Y."/>
            <person name="Kawabata A."/>
            <person name="Hikiji T."/>
            <person name="Kobatake N."/>
            <person name="Inagaki H."/>
            <person name="Ikema Y."/>
            <person name="Okamoto S."/>
            <person name="Okitani R."/>
            <person name="Kawakami T."/>
            <person name="Noguchi S."/>
            <person name="Itoh T."/>
            <person name="Shigeta K."/>
            <person name="Senba T."/>
            <person name="Matsumura K."/>
            <person name="Nakajima Y."/>
            <person name="Mizuno T."/>
            <person name="Morinaga M."/>
            <person name="Sasaki M."/>
            <person name="Togashi T."/>
            <person name="Oyama M."/>
            <person name="Hata H."/>
            <person name="Watanabe M."/>
            <person name="Komatsu T."/>
            <person name="Mizushima-Sugano J."/>
            <person name="Satoh T."/>
            <person name="Shirai Y."/>
            <person name="Takahashi Y."/>
            <person name="Nakagawa K."/>
            <person name="Okumura K."/>
            <person name="Nagase T."/>
            <person name="Nomura N."/>
            <person name="Kikuchi H."/>
            <person name="Masuho Y."/>
            <person name="Yamashita R."/>
            <person name="Nakai K."/>
            <person name="Yada T."/>
            <person name="Nakamura Y."/>
            <person name="Ohara O."/>
            <person name="Isogai T."/>
            <person name="Sugano S."/>
        </authorList>
    </citation>
    <scope>NUCLEOTIDE SEQUENCE [LARGE SCALE MRNA] OF 80-1140 (ISOFORM 1)</scope>
    <scope>VARIANTS ALA-317 AND GLY-1079</scope>
    <source>
        <tissue>Trachea</tissue>
    </source>
</reference>
<reference key="5">
    <citation type="journal article" date="2013" name="J. Proteome Res.">
        <title>Toward a comprehensive characterization of a human cancer cell phosphoproteome.</title>
        <authorList>
            <person name="Zhou H."/>
            <person name="Di Palma S."/>
            <person name="Preisinger C."/>
            <person name="Peng M."/>
            <person name="Polat A.N."/>
            <person name="Heck A.J."/>
            <person name="Mohammed S."/>
        </authorList>
    </citation>
    <scope>IDENTIFICATION BY MASS SPECTROMETRY [LARGE SCALE ANALYSIS]</scope>
    <source>
        <tissue>Cervix carcinoma</tissue>
    </source>
</reference>
<feature type="chain" id="PRO_0000208033" description="TBC1 domain family member 8">
    <location>
        <begin position="1"/>
        <end position="1140"/>
    </location>
</feature>
<feature type="domain" description="GRAM 1">
    <location>
        <begin position="145"/>
        <end position="212"/>
    </location>
</feature>
<feature type="domain" description="GRAM 2">
    <location>
        <begin position="285"/>
        <end position="353"/>
    </location>
</feature>
<feature type="domain" description="Rab-GAP TBC" evidence="2">
    <location>
        <begin position="505"/>
        <end position="692"/>
    </location>
</feature>
<feature type="region of interest" description="Disordered" evidence="3">
    <location>
        <begin position="1031"/>
        <end position="1070"/>
    </location>
</feature>
<feature type="compositionally biased region" description="Low complexity" evidence="3">
    <location>
        <begin position="1032"/>
        <end position="1043"/>
    </location>
</feature>
<feature type="site" description="Arginine finger" evidence="1">
    <location>
        <position position="552"/>
    </location>
</feature>
<feature type="site" description="Glutamine finger" evidence="1">
    <location>
        <position position="591"/>
    </location>
</feature>
<feature type="splice variant" id="VSP_038340" description="In isoform 2." evidence="7">
    <location>
        <begin position="1"/>
        <end position="243"/>
    </location>
</feature>
<feature type="sequence variant" id="VAR_047500" description="In dbSNP:rs2289953." evidence="4 5 6">
    <original>T</original>
    <variation>A</variation>
    <location>
        <position position="317"/>
    </location>
</feature>
<feature type="sequence variant" id="VAR_024654" description="In dbSNP:rs1062062.">
    <original>G</original>
    <variation>R</variation>
    <location>
        <position position="954"/>
    </location>
</feature>
<feature type="sequence variant" id="VAR_060542" description="In dbSNP:rs1057580." evidence="4">
    <original>F</original>
    <variation>L</variation>
    <location>
        <position position="1073"/>
    </location>
</feature>
<feature type="sequence variant" id="VAR_022128" description="In dbSNP:rs746924." evidence="5">
    <original>R</original>
    <variation>G</variation>
    <location>
        <position position="1079"/>
    </location>
</feature>
<feature type="sequence variant" id="VAR_022129" description="In dbSNP:rs3739011.">
    <original>M</original>
    <variation>V</variation>
    <location>
        <position position="1108"/>
    </location>
</feature>
<feature type="sequence conflict" description="In Ref. 1; BAA76517." evidence="8" ref="1">
    <original>EKD</original>
    <variation>KKK</variation>
    <location>
        <begin position="977"/>
        <end position="979"/>
    </location>
</feature>
<feature type="sequence conflict" description="In Ref. 4; BAF85515." evidence="8" ref="4">
    <original>I</original>
    <variation>T</variation>
    <location>
        <position position="1117"/>
    </location>
</feature>
<evidence type="ECO:0000250" key="1"/>
<evidence type="ECO:0000255" key="2">
    <source>
        <dbReference type="PROSITE-ProRule" id="PRU00163"/>
    </source>
</evidence>
<evidence type="ECO:0000256" key="3">
    <source>
        <dbReference type="SAM" id="MobiDB-lite"/>
    </source>
</evidence>
<evidence type="ECO:0000269" key="4">
    <source>
    </source>
</evidence>
<evidence type="ECO:0000269" key="5">
    <source>
    </source>
</evidence>
<evidence type="ECO:0000269" key="6">
    <source>
    </source>
</evidence>
<evidence type="ECO:0000303" key="7">
    <source>
    </source>
</evidence>
<evidence type="ECO:0000305" key="8"/>
<proteinExistence type="evidence at protein level"/>
<accession>O95759</accession>
<accession>A6NDL4</accession>
<accession>A8K9W1</accession>
<accession>B9A6K4</accession>
<accession>Q53SQ4</accession>
<accession>Q9UQ32</accession>
<organism>
    <name type="scientific">Homo sapiens</name>
    <name type="common">Human</name>
    <dbReference type="NCBI Taxonomy" id="9606"/>
    <lineage>
        <taxon>Eukaryota</taxon>
        <taxon>Metazoa</taxon>
        <taxon>Chordata</taxon>
        <taxon>Craniata</taxon>
        <taxon>Vertebrata</taxon>
        <taxon>Euteleostomi</taxon>
        <taxon>Mammalia</taxon>
        <taxon>Eutheria</taxon>
        <taxon>Euarchontoglires</taxon>
        <taxon>Primates</taxon>
        <taxon>Haplorrhini</taxon>
        <taxon>Catarrhini</taxon>
        <taxon>Hominidae</taxon>
        <taxon>Homo</taxon>
    </lineage>
</organism>
<keyword id="KW-0025">Alternative splicing</keyword>
<keyword id="KW-0343">GTPase activation</keyword>
<keyword id="KW-1267">Proteomics identification</keyword>
<keyword id="KW-1185">Reference proteome</keyword>
<keyword id="KW-0677">Repeat</keyword>
<sequence>MWLKPEEVLLKNALKLWVTQKSSCYFILQRRRGHGEGGGRLTGRLVGALDAVLDSNARVAPFRILLQVPGSQVYSPIACGATLEEINQHWDWLEQNLLHTLSVFDNKDDIASFVKGKVKALIAEETSSRLAEQEEEPEKFREALVKFEARFNFPEAEKLVTYYSCCCWKGRVPRQGWLYLSINHLCFYSFFLGKELKLVVPWVDIQKLERTSNVFLTDTIRITTQNKERDFSMFLNLDEVFKVMEQLADVTLRRLLDNEVFDLDPDLQEPSQITKRDLEARAQNEFFRAFFRLPRKEKLHAVVDCSLWTPFSRCHTTGRMFASDSYICFASREDGCCKIILPLREVVSIEKMEDTSLLPHPIIVSIRSKVAFQFIELRDRDSLVEALLARLKQVHANHPVHYDTSADDDMASLVFHSTSMCSDHRFGDLEMMSSQNSEESEKEKSPLMHPDALVTAFQQSGSQSPDSRMSREQIKISLWNDHFVEYGRTVCMFRTEKIRKLVAMGIPESLRGRLWLLFSDAVTDLASHPGYYGNLVEESLGKCCLVTEEIERDLHRSLPEHPAFQNETGIAALRRVLTAYAHRNPKIGYCQSMNILTSVLLLYTKEEEAFWLLVAVCERMLPDYFNHRVIGAQVDQSVFEELIKGHLPELAEHMNDLSALASVSLSWFLTLFLSIMPLESAVNVVDCFFYDGIKAIFQLGLAVLEANAEDLCSSKDDGQALMILSRFLDHIKNEDSPGPPVGSHHAFFSDDQEPYPVTDISDLIRDSYEKFGDQSVEQIEHLRYKHRIRVLQGHEDTTKQNVLRVVIPEVSILPEDLEELYDLFKREHMMSCYWEQPRPMASRHDPSRPYAEQYRIDARQFAHLFQLVSPWTCGAHTEILAERTFRLLDDNMDQLIEFKAFVSCLDIMYNGEMNEKIKLLYRLHIPPALTENDRDSQSPLRNPLLSTSRPLVFGKPNGDAVDYQKQLKQMIKDLAKEKDKTEKELPKMSQREFIQFCKTLYSMFHEDPEENDLYQAIATVTTLLLQIGEVGQRGSSSGSCSQECGEELRASAPSPEDSVFADTGKTPQDSQAFPEAAERDWTVSLEHILASLLTEQSLVNFFEKPLDMKSKLENAKINQYNLKTFEMSHQSQSELKLSNL</sequence>